<protein>
    <recommendedName>
        <fullName evidence="1">ATP-dependent Clp protease proteolytic subunit 2</fullName>
        <ecNumber evidence="1">3.4.21.92</ecNumber>
    </recommendedName>
    <alternativeName>
        <fullName evidence="1">Endopeptidase Clp 2</fullName>
    </alternativeName>
</protein>
<organism>
    <name type="scientific">Salinibacter ruber (strain DSM 13855 / M31)</name>
    <dbReference type="NCBI Taxonomy" id="309807"/>
    <lineage>
        <taxon>Bacteria</taxon>
        <taxon>Pseudomonadati</taxon>
        <taxon>Rhodothermota</taxon>
        <taxon>Rhodothermia</taxon>
        <taxon>Rhodothermales</taxon>
        <taxon>Salinibacteraceae</taxon>
        <taxon>Salinibacter</taxon>
    </lineage>
</organism>
<reference key="1">
    <citation type="journal article" date="2005" name="Proc. Natl. Acad. Sci. U.S.A.">
        <title>The genome of Salinibacter ruber: convergence and gene exchange among hyperhalophilic bacteria and archaea.</title>
        <authorList>
            <person name="Mongodin E.F."/>
            <person name="Nelson K.E."/>
            <person name="Daugherty S."/>
            <person name="DeBoy R.T."/>
            <person name="Wister J."/>
            <person name="Khouri H."/>
            <person name="Weidman J."/>
            <person name="Walsh D.A."/>
            <person name="Papke R.T."/>
            <person name="Sanchez Perez G."/>
            <person name="Sharma A.K."/>
            <person name="Nesbo C.L."/>
            <person name="MacLeod D."/>
            <person name="Bapteste E."/>
            <person name="Doolittle W.F."/>
            <person name="Charlebois R.L."/>
            <person name="Legault B."/>
            <person name="Rodriguez-Valera F."/>
        </authorList>
    </citation>
    <scope>NUCLEOTIDE SEQUENCE [LARGE SCALE GENOMIC DNA]</scope>
    <source>
        <strain>DSM 13855 / CECT 5946 / M31</strain>
    </source>
</reference>
<proteinExistence type="inferred from homology"/>
<gene>
    <name evidence="1" type="primary">clpP2</name>
    <name type="ordered locus">SRU_2674</name>
</gene>
<evidence type="ECO:0000255" key="1">
    <source>
        <dbReference type="HAMAP-Rule" id="MF_00444"/>
    </source>
</evidence>
<evidence type="ECO:0000256" key="2">
    <source>
        <dbReference type="SAM" id="MobiDB-lite"/>
    </source>
</evidence>
<evidence type="ECO:0000305" key="3"/>
<keyword id="KW-0963">Cytoplasm</keyword>
<keyword id="KW-0378">Hydrolase</keyword>
<keyword id="KW-0645">Protease</keyword>
<keyword id="KW-1185">Reference proteome</keyword>
<keyword id="KW-0720">Serine protease</keyword>
<accession>Q2RZ59</accession>
<comment type="function">
    <text evidence="1">Cleaves peptides in various proteins in a process that requires ATP hydrolysis. Has a chymotrypsin-like activity. Plays a major role in the degradation of misfolded proteins.</text>
</comment>
<comment type="catalytic activity">
    <reaction evidence="1">
        <text>Hydrolysis of proteins to small peptides in the presence of ATP and magnesium. alpha-casein is the usual test substrate. In the absence of ATP, only oligopeptides shorter than five residues are hydrolyzed (such as succinyl-Leu-Tyr-|-NHMec, and Leu-Tyr-Leu-|-Tyr-Trp, in which cleavage of the -Tyr-|-Leu- and -Tyr-|-Trp bonds also occurs).</text>
        <dbReference type="EC" id="3.4.21.92"/>
    </reaction>
</comment>
<comment type="subunit">
    <text evidence="1">Fourteen ClpP subunits assemble into 2 heptameric rings which stack back to back to give a disk-like structure with a central cavity, resembling the structure of eukaryotic proteasomes.</text>
</comment>
<comment type="subcellular location">
    <subcellularLocation>
        <location evidence="1">Cytoplasm</location>
    </subcellularLocation>
</comment>
<comment type="similarity">
    <text evidence="1">Belongs to the peptidase S14 family.</text>
</comment>
<comment type="sequence caution" evidence="3">
    <conflict type="erroneous initiation">
        <sequence resource="EMBL-CDS" id="ABC45471"/>
    </conflict>
</comment>
<feature type="chain" id="PRO_0000236403" description="ATP-dependent Clp protease proteolytic subunit 2">
    <location>
        <begin position="1"/>
        <end position="233"/>
    </location>
</feature>
<feature type="region of interest" description="Disordered" evidence="2">
    <location>
        <begin position="214"/>
        <end position="233"/>
    </location>
</feature>
<feature type="active site" description="Nucleophile" evidence="1">
    <location>
        <position position="116"/>
    </location>
</feature>
<feature type="active site" evidence="1">
    <location>
        <position position="141"/>
    </location>
</feature>
<dbReference type="EC" id="3.4.21.92" evidence="1"/>
<dbReference type="EMBL" id="CP000159">
    <property type="protein sequence ID" value="ABC45471.1"/>
    <property type="status" value="ALT_INIT"/>
    <property type="molecule type" value="Genomic_DNA"/>
</dbReference>
<dbReference type="RefSeq" id="YP_446772.1">
    <property type="nucleotide sequence ID" value="NC_007677.1"/>
</dbReference>
<dbReference type="SMR" id="Q2RZ59"/>
<dbReference type="STRING" id="309807.SRU_2674"/>
<dbReference type="MEROPS" id="S14.001"/>
<dbReference type="EnsemblBacteria" id="ABC45471">
    <property type="protein sequence ID" value="ABC45471"/>
    <property type="gene ID" value="SRU_2674"/>
</dbReference>
<dbReference type="KEGG" id="sru:SRU_2674"/>
<dbReference type="PATRIC" id="fig|309807.25.peg.2787"/>
<dbReference type="eggNOG" id="COG0740">
    <property type="taxonomic scope" value="Bacteria"/>
</dbReference>
<dbReference type="HOGENOM" id="CLU_058707_3_1_10"/>
<dbReference type="OrthoDB" id="9802800at2"/>
<dbReference type="Proteomes" id="UP000008674">
    <property type="component" value="Chromosome"/>
</dbReference>
<dbReference type="GO" id="GO:0005737">
    <property type="term" value="C:cytoplasm"/>
    <property type="evidence" value="ECO:0007669"/>
    <property type="project" value="UniProtKB-SubCell"/>
</dbReference>
<dbReference type="GO" id="GO:0009368">
    <property type="term" value="C:endopeptidase Clp complex"/>
    <property type="evidence" value="ECO:0007669"/>
    <property type="project" value="TreeGrafter"/>
</dbReference>
<dbReference type="GO" id="GO:0004176">
    <property type="term" value="F:ATP-dependent peptidase activity"/>
    <property type="evidence" value="ECO:0007669"/>
    <property type="project" value="InterPro"/>
</dbReference>
<dbReference type="GO" id="GO:0051117">
    <property type="term" value="F:ATPase binding"/>
    <property type="evidence" value="ECO:0007669"/>
    <property type="project" value="TreeGrafter"/>
</dbReference>
<dbReference type="GO" id="GO:0004252">
    <property type="term" value="F:serine-type endopeptidase activity"/>
    <property type="evidence" value="ECO:0007669"/>
    <property type="project" value="UniProtKB-UniRule"/>
</dbReference>
<dbReference type="GO" id="GO:0006515">
    <property type="term" value="P:protein quality control for misfolded or incompletely synthesized proteins"/>
    <property type="evidence" value="ECO:0007669"/>
    <property type="project" value="TreeGrafter"/>
</dbReference>
<dbReference type="CDD" id="cd07017">
    <property type="entry name" value="S14_ClpP_2"/>
    <property type="match status" value="1"/>
</dbReference>
<dbReference type="FunFam" id="3.90.226.10:FF:000001">
    <property type="entry name" value="ATP-dependent Clp protease proteolytic subunit"/>
    <property type="match status" value="1"/>
</dbReference>
<dbReference type="Gene3D" id="3.90.226.10">
    <property type="entry name" value="2-enoyl-CoA Hydratase, Chain A, domain 1"/>
    <property type="match status" value="1"/>
</dbReference>
<dbReference type="HAMAP" id="MF_00444">
    <property type="entry name" value="ClpP"/>
    <property type="match status" value="1"/>
</dbReference>
<dbReference type="InterPro" id="IPR001907">
    <property type="entry name" value="ClpP"/>
</dbReference>
<dbReference type="InterPro" id="IPR029045">
    <property type="entry name" value="ClpP/crotonase-like_dom_sf"/>
</dbReference>
<dbReference type="InterPro" id="IPR023562">
    <property type="entry name" value="ClpP/TepA"/>
</dbReference>
<dbReference type="InterPro" id="IPR033135">
    <property type="entry name" value="ClpP_His_AS"/>
</dbReference>
<dbReference type="InterPro" id="IPR018215">
    <property type="entry name" value="ClpP_Ser_AS"/>
</dbReference>
<dbReference type="NCBIfam" id="NF001368">
    <property type="entry name" value="PRK00277.1"/>
    <property type="match status" value="1"/>
</dbReference>
<dbReference type="NCBIfam" id="NF009205">
    <property type="entry name" value="PRK12553.1"/>
    <property type="match status" value="1"/>
</dbReference>
<dbReference type="PANTHER" id="PTHR10381">
    <property type="entry name" value="ATP-DEPENDENT CLP PROTEASE PROTEOLYTIC SUBUNIT"/>
    <property type="match status" value="1"/>
</dbReference>
<dbReference type="PANTHER" id="PTHR10381:SF70">
    <property type="entry name" value="ATP-DEPENDENT CLP PROTEASE PROTEOLYTIC SUBUNIT"/>
    <property type="match status" value="1"/>
</dbReference>
<dbReference type="Pfam" id="PF00574">
    <property type="entry name" value="CLP_protease"/>
    <property type="match status" value="1"/>
</dbReference>
<dbReference type="PRINTS" id="PR00127">
    <property type="entry name" value="CLPPROTEASEP"/>
</dbReference>
<dbReference type="SUPFAM" id="SSF52096">
    <property type="entry name" value="ClpP/crotonase"/>
    <property type="match status" value="1"/>
</dbReference>
<dbReference type="PROSITE" id="PS00382">
    <property type="entry name" value="CLP_PROTEASE_HIS"/>
    <property type="match status" value="1"/>
</dbReference>
<dbReference type="PROSITE" id="PS00381">
    <property type="entry name" value="CLP_PROTEASE_SER"/>
    <property type="match status" value="1"/>
</dbReference>
<sequence length="233" mass="25206">MTSLPGGIYDGDLGDQPMSGLVPMVVEQTTRGERAYDIFSRLLKERIVFIGTPINDQIANLTVAQLLYLASESSEKPINLYINSPGGVIYSGLGVYDTMQYIGAPVSTICVGLAASMGSVLLAAGEDDSRACLPNSRVMIHQPMGGAEGQASDIEIQAEEIMWLKERLYEILALHTGQDIDQIEADADRNYWMSAEEAEEYGLVDNVLNPDNLEGLKSIQPNGEAADDSEDDA</sequence>
<name>CLPP2_SALRD</name>